<gene>
    <name evidence="1" type="primary">tfbD</name>
    <name type="ordered locus">VNG_0869G</name>
</gene>
<reference key="1">
    <citation type="journal article" date="2000" name="Proc. Natl. Acad. Sci. U.S.A.">
        <title>Genome sequence of Halobacterium species NRC-1.</title>
        <authorList>
            <person name="Ng W.V."/>
            <person name="Kennedy S.P."/>
            <person name="Mahairas G.G."/>
            <person name="Berquist B."/>
            <person name="Pan M."/>
            <person name="Shukla H.D."/>
            <person name="Lasky S.R."/>
            <person name="Baliga N.S."/>
            <person name="Thorsson V."/>
            <person name="Sbrogna J."/>
            <person name="Swartzell S."/>
            <person name="Weir D."/>
            <person name="Hall J."/>
            <person name="Dahl T.A."/>
            <person name="Welti R."/>
            <person name="Goo Y.A."/>
            <person name="Leithauser B."/>
            <person name="Keller K."/>
            <person name="Cruz R."/>
            <person name="Danson M.J."/>
            <person name="Hough D.W."/>
            <person name="Maddocks D.G."/>
            <person name="Jablonski P.E."/>
            <person name="Krebs M.P."/>
            <person name="Angevine C.M."/>
            <person name="Dale H."/>
            <person name="Isenbarger T.A."/>
            <person name="Peck R.F."/>
            <person name="Pohlschroder M."/>
            <person name="Spudich J.L."/>
            <person name="Jung K.-H."/>
            <person name="Alam M."/>
            <person name="Freitas T."/>
            <person name="Hou S."/>
            <person name="Daniels C.J."/>
            <person name="Dennis P.P."/>
            <person name="Omer A.D."/>
            <person name="Ebhardt H."/>
            <person name="Lowe T.M."/>
            <person name="Liang P."/>
            <person name="Riley M."/>
            <person name="Hood L."/>
            <person name="DasSarma S."/>
        </authorList>
    </citation>
    <scope>NUCLEOTIDE SEQUENCE [LARGE SCALE GENOMIC DNA]</scope>
    <source>
        <strain>ATCC 700922 / JCM 11081 / NRC-1</strain>
    </source>
</reference>
<evidence type="ECO:0000255" key="1">
    <source>
        <dbReference type="HAMAP-Rule" id="MF_00383"/>
    </source>
</evidence>
<evidence type="ECO:0000255" key="2">
    <source>
        <dbReference type="PROSITE-ProRule" id="PRU00469"/>
    </source>
</evidence>
<evidence type="ECO:0000256" key="3">
    <source>
        <dbReference type="SAM" id="MobiDB-lite"/>
    </source>
</evidence>
<keyword id="KW-0479">Metal-binding</keyword>
<keyword id="KW-1185">Reference proteome</keyword>
<keyword id="KW-0677">Repeat</keyword>
<keyword id="KW-0804">Transcription</keyword>
<keyword id="KW-0805">Transcription regulation</keyword>
<keyword id="KW-0862">Zinc</keyword>
<keyword id="KW-0863">Zinc-finger</keyword>
<sequence>MTNQRTTRDGSHGTESVPTQRSRESTDEDHGCPECNGDLVTDEDRGETTCGECGLVVEEDGIDHGPEWRAFNAQEQDEKSRVGAPTTNMMHDKGLSTNIGWQDKDAYGNTLSGRQRRKMQRLRKWNERFRTRNSKERNLKQALGEIERMASAFGLPDSVRETASVIYRRALGEDLLPGRSIEGVATSALYAAARQANTPRSLDEVASVSRVDRGEIARTYRYVARELSLEVAPTDPASYVPRFCSDLELSGDVERRARDLLAAAADAGITSGKSPVGLAAASVYAAALLTNERVTQNEVSTVANVSEVTIRNRYHEILDAGGEPGVEA</sequence>
<accession>Q9HR45</accession>
<feature type="chain" id="PRO_0000119314" description="Transcription initiation factor IIB 4">
    <location>
        <begin position="1"/>
        <end position="328"/>
    </location>
</feature>
<feature type="repeat" description="1">
    <location>
        <begin position="144"/>
        <end position="227"/>
    </location>
</feature>
<feature type="repeat" description="2">
    <location>
        <begin position="238"/>
        <end position="319"/>
    </location>
</feature>
<feature type="zinc finger region" description="TFIIB-type" evidence="2">
    <location>
        <begin position="28"/>
        <end position="58"/>
    </location>
</feature>
<feature type="region of interest" description="Disordered" evidence="3">
    <location>
        <begin position="1"/>
        <end position="47"/>
    </location>
</feature>
<feature type="compositionally biased region" description="Basic and acidic residues" evidence="3">
    <location>
        <begin position="1"/>
        <end position="12"/>
    </location>
</feature>
<feature type="compositionally biased region" description="Basic and acidic residues" evidence="3">
    <location>
        <begin position="21"/>
        <end position="32"/>
    </location>
</feature>
<feature type="binding site" evidence="2">
    <location>
        <position position="32"/>
    </location>
    <ligand>
        <name>Zn(2+)</name>
        <dbReference type="ChEBI" id="CHEBI:29105"/>
    </ligand>
</feature>
<feature type="binding site" evidence="2">
    <location>
        <position position="35"/>
    </location>
    <ligand>
        <name>Zn(2+)</name>
        <dbReference type="ChEBI" id="CHEBI:29105"/>
    </ligand>
</feature>
<feature type="binding site" evidence="2">
    <location>
        <position position="50"/>
    </location>
    <ligand>
        <name>Zn(2+)</name>
        <dbReference type="ChEBI" id="CHEBI:29105"/>
    </ligand>
</feature>
<feature type="binding site" evidence="2">
    <location>
        <position position="53"/>
    </location>
    <ligand>
        <name>Zn(2+)</name>
        <dbReference type="ChEBI" id="CHEBI:29105"/>
    </ligand>
</feature>
<comment type="function">
    <text evidence="1">Stabilizes TBP binding to an archaeal box-A promoter. Also responsible for recruiting RNA polymerase II to the pre-initiation complex (DNA-TBP-TFIIB).</text>
</comment>
<comment type="similarity">
    <text evidence="1">Belongs to the TFIIB family.</text>
</comment>
<dbReference type="EMBL" id="AE004437">
    <property type="protein sequence ID" value="AAG19313.1"/>
    <property type="molecule type" value="Genomic_DNA"/>
</dbReference>
<dbReference type="PIR" id="E84243">
    <property type="entry name" value="E84243"/>
</dbReference>
<dbReference type="RefSeq" id="WP_010902609.1">
    <property type="nucleotide sequence ID" value="NC_002607.1"/>
</dbReference>
<dbReference type="SMR" id="Q9HR45"/>
<dbReference type="FunCoup" id="Q9HR45">
    <property type="interactions" value="5"/>
</dbReference>
<dbReference type="STRING" id="64091.VNG_0869G"/>
<dbReference type="PaxDb" id="64091-VNG_0869G"/>
<dbReference type="KEGG" id="hal:VNG_0869G"/>
<dbReference type="PATRIC" id="fig|64091.14.peg.666"/>
<dbReference type="HOGENOM" id="CLU_043736_0_1_2"/>
<dbReference type="InParanoid" id="Q9HR45"/>
<dbReference type="OrthoDB" id="7429at2157"/>
<dbReference type="PhylomeDB" id="Q9HR45"/>
<dbReference type="Proteomes" id="UP000000554">
    <property type="component" value="Chromosome"/>
</dbReference>
<dbReference type="GO" id="GO:0097550">
    <property type="term" value="C:transcription preinitiation complex"/>
    <property type="evidence" value="ECO:0000318"/>
    <property type="project" value="GO_Central"/>
</dbReference>
<dbReference type="GO" id="GO:0003700">
    <property type="term" value="F:DNA-binding transcription factor activity"/>
    <property type="evidence" value="ECO:0007669"/>
    <property type="project" value="UniProtKB-UniRule"/>
</dbReference>
<dbReference type="GO" id="GO:0017025">
    <property type="term" value="F:TBP-class protein binding"/>
    <property type="evidence" value="ECO:0007669"/>
    <property type="project" value="InterPro"/>
</dbReference>
<dbReference type="GO" id="GO:0008270">
    <property type="term" value="F:zinc ion binding"/>
    <property type="evidence" value="ECO:0007669"/>
    <property type="project" value="UniProtKB-UniRule"/>
</dbReference>
<dbReference type="GO" id="GO:0006352">
    <property type="term" value="P:DNA-templated transcription initiation"/>
    <property type="evidence" value="ECO:0000318"/>
    <property type="project" value="GO_Central"/>
</dbReference>
<dbReference type="GO" id="GO:0070897">
    <property type="term" value="P:transcription preinitiation complex assembly"/>
    <property type="evidence" value="ECO:0007669"/>
    <property type="project" value="InterPro"/>
</dbReference>
<dbReference type="CDD" id="cd20549">
    <property type="entry name" value="CYCLIN_TFIIB_archaea_like_rpt1"/>
    <property type="match status" value="1"/>
</dbReference>
<dbReference type="FunFam" id="1.10.472.10:FF:000023">
    <property type="entry name" value="Transcription initiation factor IIB"/>
    <property type="match status" value="1"/>
</dbReference>
<dbReference type="FunFam" id="1.10.472.170:FF:000001">
    <property type="entry name" value="Transcription initiation factor IIB"/>
    <property type="match status" value="1"/>
</dbReference>
<dbReference type="Gene3D" id="1.10.472.170">
    <property type="match status" value="1"/>
</dbReference>
<dbReference type="Gene3D" id="1.10.472.10">
    <property type="entry name" value="Cyclin-like"/>
    <property type="match status" value="1"/>
</dbReference>
<dbReference type="HAMAP" id="MF_00383">
    <property type="entry name" value="TF2B_arch"/>
    <property type="match status" value="1"/>
</dbReference>
<dbReference type="InterPro" id="IPR013763">
    <property type="entry name" value="Cyclin-like_dom"/>
</dbReference>
<dbReference type="InterPro" id="IPR036915">
    <property type="entry name" value="Cyclin-like_sf"/>
</dbReference>
<dbReference type="InterPro" id="IPR000812">
    <property type="entry name" value="TFIIB"/>
</dbReference>
<dbReference type="InterPro" id="IPR023484">
    <property type="entry name" value="TFIIB_arc"/>
</dbReference>
<dbReference type="InterPro" id="IPR023486">
    <property type="entry name" value="TFIIB_CS"/>
</dbReference>
<dbReference type="InterPro" id="IPR013150">
    <property type="entry name" value="TFIIB_cyclin"/>
</dbReference>
<dbReference type="InterPro" id="IPR013137">
    <property type="entry name" value="Znf_TFIIB"/>
</dbReference>
<dbReference type="NCBIfam" id="NF001658">
    <property type="entry name" value="PRK00423.1"/>
    <property type="match status" value="1"/>
</dbReference>
<dbReference type="PANTHER" id="PTHR11618:SF13">
    <property type="entry name" value="TRANSCRIPTION INITIATION FACTOR IIB"/>
    <property type="match status" value="1"/>
</dbReference>
<dbReference type="PANTHER" id="PTHR11618">
    <property type="entry name" value="TRANSCRIPTION INITIATION FACTOR IIB-RELATED"/>
    <property type="match status" value="1"/>
</dbReference>
<dbReference type="Pfam" id="PF00382">
    <property type="entry name" value="TFIIB"/>
    <property type="match status" value="2"/>
</dbReference>
<dbReference type="Pfam" id="PF08271">
    <property type="entry name" value="Zn_Ribbon_TF"/>
    <property type="match status" value="1"/>
</dbReference>
<dbReference type="PRINTS" id="PR00685">
    <property type="entry name" value="TIFACTORIIB"/>
</dbReference>
<dbReference type="SMART" id="SM00385">
    <property type="entry name" value="CYCLIN"/>
    <property type="match status" value="2"/>
</dbReference>
<dbReference type="SUPFAM" id="SSF47954">
    <property type="entry name" value="Cyclin-like"/>
    <property type="match status" value="2"/>
</dbReference>
<dbReference type="SUPFAM" id="SSF57783">
    <property type="entry name" value="Zinc beta-ribbon"/>
    <property type="match status" value="1"/>
</dbReference>
<dbReference type="PROSITE" id="PS00782">
    <property type="entry name" value="TFIIB"/>
    <property type="match status" value="2"/>
</dbReference>
<dbReference type="PROSITE" id="PS51134">
    <property type="entry name" value="ZF_TFIIB"/>
    <property type="match status" value="1"/>
</dbReference>
<protein>
    <recommendedName>
        <fullName evidence="1">Transcription initiation factor IIB 4</fullName>
        <shortName evidence="1">TFIIB 4</shortName>
    </recommendedName>
</protein>
<proteinExistence type="inferred from homology"/>
<name>TF2B4_HALSA</name>
<organism>
    <name type="scientific">Halobacterium salinarum (strain ATCC 700922 / JCM 11081 / NRC-1)</name>
    <name type="common">Halobacterium halobium</name>
    <dbReference type="NCBI Taxonomy" id="64091"/>
    <lineage>
        <taxon>Archaea</taxon>
        <taxon>Methanobacteriati</taxon>
        <taxon>Methanobacteriota</taxon>
        <taxon>Stenosarchaea group</taxon>
        <taxon>Halobacteria</taxon>
        <taxon>Halobacteriales</taxon>
        <taxon>Halobacteriaceae</taxon>
        <taxon>Halobacterium</taxon>
        <taxon>Halobacterium salinarum NRC-34001</taxon>
    </lineage>
</organism>